<accession>A9MEB0</accession>
<protein>
    <recommendedName>
        <fullName evidence="1">GMP synthase [glutamine-hydrolyzing]</fullName>
        <ecNumber evidence="1">6.3.5.2</ecNumber>
    </recommendedName>
    <alternativeName>
        <fullName evidence="1">GMP synthetase</fullName>
    </alternativeName>
    <alternativeName>
        <fullName evidence="1">Glutamine amidotransferase</fullName>
    </alternativeName>
</protein>
<organism>
    <name type="scientific">Brucella canis (strain ATCC 23365 / NCTC 10854 / RM-666)</name>
    <dbReference type="NCBI Taxonomy" id="483179"/>
    <lineage>
        <taxon>Bacteria</taxon>
        <taxon>Pseudomonadati</taxon>
        <taxon>Pseudomonadota</taxon>
        <taxon>Alphaproteobacteria</taxon>
        <taxon>Hyphomicrobiales</taxon>
        <taxon>Brucellaceae</taxon>
        <taxon>Brucella/Ochrobactrum group</taxon>
        <taxon>Brucella</taxon>
    </lineage>
</organism>
<proteinExistence type="inferred from homology"/>
<gene>
    <name evidence="1" type="primary">guaA</name>
    <name type="ordered locus">BCAN_B0364</name>
</gene>
<comment type="function">
    <text evidence="1">Catalyzes the synthesis of GMP from XMP.</text>
</comment>
<comment type="catalytic activity">
    <reaction evidence="1">
        <text>XMP + L-glutamine + ATP + H2O = GMP + L-glutamate + AMP + diphosphate + 2 H(+)</text>
        <dbReference type="Rhea" id="RHEA:11680"/>
        <dbReference type="ChEBI" id="CHEBI:15377"/>
        <dbReference type="ChEBI" id="CHEBI:15378"/>
        <dbReference type="ChEBI" id="CHEBI:29985"/>
        <dbReference type="ChEBI" id="CHEBI:30616"/>
        <dbReference type="ChEBI" id="CHEBI:33019"/>
        <dbReference type="ChEBI" id="CHEBI:57464"/>
        <dbReference type="ChEBI" id="CHEBI:58115"/>
        <dbReference type="ChEBI" id="CHEBI:58359"/>
        <dbReference type="ChEBI" id="CHEBI:456215"/>
        <dbReference type="EC" id="6.3.5.2"/>
    </reaction>
</comment>
<comment type="pathway">
    <text evidence="1">Purine metabolism; GMP biosynthesis; GMP from XMP (L-Gln route): step 1/1.</text>
</comment>
<comment type="subunit">
    <text evidence="1">Homodimer.</text>
</comment>
<keyword id="KW-0067">ATP-binding</keyword>
<keyword id="KW-0315">Glutamine amidotransferase</keyword>
<keyword id="KW-0332">GMP biosynthesis</keyword>
<keyword id="KW-0436">Ligase</keyword>
<keyword id="KW-0547">Nucleotide-binding</keyword>
<keyword id="KW-0658">Purine biosynthesis</keyword>
<keyword id="KW-1185">Reference proteome</keyword>
<feature type="chain" id="PRO_1000120226" description="GMP synthase [glutamine-hydrolyzing]">
    <location>
        <begin position="1"/>
        <end position="520"/>
    </location>
</feature>
<feature type="domain" description="Glutamine amidotransferase type-1" evidence="1">
    <location>
        <begin position="9"/>
        <end position="202"/>
    </location>
</feature>
<feature type="domain" description="GMPS ATP-PPase" evidence="1">
    <location>
        <begin position="203"/>
        <end position="395"/>
    </location>
</feature>
<feature type="active site" description="Nucleophile" evidence="1">
    <location>
        <position position="86"/>
    </location>
</feature>
<feature type="active site" evidence="1">
    <location>
        <position position="176"/>
    </location>
</feature>
<feature type="active site" evidence="1">
    <location>
        <position position="178"/>
    </location>
</feature>
<feature type="binding site" evidence="1">
    <location>
        <begin position="230"/>
        <end position="236"/>
    </location>
    <ligand>
        <name>ATP</name>
        <dbReference type="ChEBI" id="CHEBI:30616"/>
    </ligand>
</feature>
<reference key="1">
    <citation type="submission" date="2007-10" db="EMBL/GenBank/DDBJ databases">
        <title>Brucella canis ATCC 23365 whole genome shotgun sequencing project.</title>
        <authorList>
            <person name="Setubal J.C."/>
            <person name="Bowns C."/>
            <person name="Boyle S."/>
            <person name="Crasta O.R."/>
            <person name="Czar M.J."/>
            <person name="Dharmanolla C."/>
            <person name="Gillespie J.J."/>
            <person name="Kenyon R.W."/>
            <person name="Lu J."/>
            <person name="Mane S."/>
            <person name="Mohapatra S."/>
            <person name="Nagrani S."/>
            <person name="Purkayastha A."/>
            <person name="Rajasimha H.K."/>
            <person name="Shallom J.M."/>
            <person name="Shallom S."/>
            <person name="Shukla M."/>
            <person name="Snyder E.E."/>
            <person name="Sobral B.W."/>
            <person name="Wattam A.R."/>
            <person name="Will R."/>
            <person name="Williams K."/>
            <person name="Yoo H."/>
            <person name="Bruce D."/>
            <person name="Detter C."/>
            <person name="Munk C."/>
            <person name="Brettin T.S."/>
        </authorList>
    </citation>
    <scope>NUCLEOTIDE SEQUENCE [LARGE SCALE GENOMIC DNA]</scope>
    <source>
        <strain>ATCC 23365 / NCTC 10854 / RM-666</strain>
    </source>
</reference>
<sequence length="520" mass="57069">MSTTAYPDTILIIDFGSQVTQLIARRVREANVYCEIVPFQSADEAFKRLQPKGVILSGSPHSTTDIGSPRAPQAIFDAGIPVLGICYGEQTMCAQLGGNVESGHDREFGRAFLDVQEDSPLFAGIWAKGTRHQVWMSHGDRVTSLPDGFTIIGTSPNAPYAVIADEKRKYYGVQFHPEVVHTPDGAKLLQNFVHRIVGVKPGWTMGAYREQAVEAIRKQVGSGKVICALSGGVDSSVAALLAHEAVGDQLTCILVDHGLMRKDEAQQVVEMFREHYNLPLILVDASDRFIGALEGESDPEKKRKTIGRLFIEVFEEEARKLGGADFLVQGTLYPDVIESVSFTGGPSVTIKSHHNVGGLPERMKMQLVEPLRELFKDEVRLLGKELGLPDSFIGRHPFPGPGLAIRCPGGVTRGKLEILREADAIYLDEIRKAGLYDAIWQAFAVLLPVQTVGVMGDGRTYEFVCALRAVTSVDGMTADFYHYDMNFLGNAATRIINEVRGINRVVYDVTSKPPGTIEWE</sequence>
<dbReference type="EC" id="6.3.5.2" evidence="1"/>
<dbReference type="EMBL" id="CP000873">
    <property type="protein sequence ID" value="ABX63548.1"/>
    <property type="molecule type" value="Genomic_DNA"/>
</dbReference>
<dbReference type="RefSeq" id="WP_004690106.1">
    <property type="nucleotide sequence ID" value="NC_010104.1"/>
</dbReference>
<dbReference type="SMR" id="A9MEB0"/>
<dbReference type="MEROPS" id="C26.957"/>
<dbReference type="GeneID" id="55592054"/>
<dbReference type="KEGG" id="bcs:BCAN_B0364"/>
<dbReference type="HOGENOM" id="CLU_014340_0_5_5"/>
<dbReference type="PhylomeDB" id="A9MEB0"/>
<dbReference type="UniPathway" id="UPA00189">
    <property type="reaction ID" value="UER00296"/>
</dbReference>
<dbReference type="Proteomes" id="UP000001385">
    <property type="component" value="Chromosome II"/>
</dbReference>
<dbReference type="GO" id="GO:0005829">
    <property type="term" value="C:cytosol"/>
    <property type="evidence" value="ECO:0007669"/>
    <property type="project" value="TreeGrafter"/>
</dbReference>
<dbReference type="GO" id="GO:0005524">
    <property type="term" value="F:ATP binding"/>
    <property type="evidence" value="ECO:0007669"/>
    <property type="project" value="UniProtKB-UniRule"/>
</dbReference>
<dbReference type="GO" id="GO:0003921">
    <property type="term" value="F:GMP synthase activity"/>
    <property type="evidence" value="ECO:0007669"/>
    <property type="project" value="InterPro"/>
</dbReference>
<dbReference type="CDD" id="cd01742">
    <property type="entry name" value="GATase1_GMP_Synthase"/>
    <property type="match status" value="1"/>
</dbReference>
<dbReference type="CDD" id="cd01997">
    <property type="entry name" value="GMP_synthase_C"/>
    <property type="match status" value="1"/>
</dbReference>
<dbReference type="FunFam" id="3.30.300.10:FF:000002">
    <property type="entry name" value="GMP synthase [glutamine-hydrolyzing]"/>
    <property type="match status" value="1"/>
</dbReference>
<dbReference type="FunFam" id="3.40.50.620:FF:000001">
    <property type="entry name" value="GMP synthase [glutamine-hydrolyzing]"/>
    <property type="match status" value="1"/>
</dbReference>
<dbReference type="FunFam" id="3.40.50.880:FF:000001">
    <property type="entry name" value="GMP synthase [glutamine-hydrolyzing]"/>
    <property type="match status" value="1"/>
</dbReference>
<dbReference type="Gene3D" id="3.30.300.10">
    <property type="match status" value="1"/>
</dbReference>
<dbReference type="Gene3D" id="3.40.50.880">
    <property type="match status" value="1"/>
</dbReference>
<dbReference type="Gene3D" id="3.40.50.620">
    <property type="entry name" value="HUPs"/>
    <property type="match status" value="1"/>
</dbReference>
<dbReference type="HAMAP" id="MF_00344">
    <property type="entry name" value="GMP_synthase"/>
    <property type="match status" value="1"/>
</dbReference>
<dbReference type="InterPro" id="IPR029062">
    <property type="entry name" value="Class_I_gatase-like"/>
</dbReference>
<dbReference type="InterPro" id="IPR017926">
    <property type="entry name" value="GATASE"/>
</dbReference>
<dbReference type="InterPro" id="IPR001674">
    <property type="entry name" value="GMP_synth_C"/>
</dbReference>
<dbReference type="InterPro" id="IPR004739">
    <property type="entry name" value="GMP_synth_GATase"/>
</dbReference>
<dbReference type="InterPro" id="IPR022955">
    <property type="entry name" value="GMP_synthase"/>
</dbReference>
<dbReference type="InterPro" id="IPR025777">
    <property type="entry name" value="GMPS_ATP_PPase_dom"/>
</dbReference>
<dbReference type="InterPro" id="IPR022310">
    <property type="entry name" value="NAD/GMP_synthase"/>
</dbReference>
<dbReference type="InterPro" id="IPR014729">
    <property type="entry name" value="Rossmann-like_a/b/a_fold"/>
</dbReference>
<dbReference type="NCBIfam" id="TIGR00884">
    <property type="entry name" value="guaA_Cterm"/>
    <property type="match status" value="1"/>
</dbReference>
<dbReference type="NCBIfam" id="TIGR00888">
    <property type="entry name" value="guaA_Nterm"/>
    <property type="match status" value="1"/>
</dbReference>
<dbReference type="NCBIfam" id="NF000848">
    <property type="entry name" value="PRK00074.1"/>
    <property type="match status" value="1"/>
</dbReference>
<dbReference type="PANTHER" id="PTHR11922:SF2">
    <property type="entry name" value="GMP SYNTHASE [GLUTAMINE-HYDROLYZING]"/>
    <property type="match status" value="1"/>
</dbReference>
<dbReference type="PANTHER" id="PTHR11922">
    <property type="entry name" value="GMP SYNTHASE-RELATED"/>
    <property type="match status" value="1"/>
</dbReference>
<dbReference type="Pfam" id="PF00117">
    <property type="entry name" value="GATase"/>
    <property type="match status" value="1"/>
</dbReference>
<dbReference type="Pfam" id="PF00958">
    <property type="entry name" value="GMP_synt_C"/>
    <property type="match status" value="1"/>
</dbReference>
<dbReference type="Pfam" id="PF02540">
    <property type="entry name" value="NAD_synthase"/>
    <property type="match status" value="1"/>
</dbReference>
<dbReference type="PRINTS" id="PR00097">
    <property type="entry name" value="ANTSNTHASEII"/>
</dbReference>
<dbReference type="PRINTS" id="PR00096">
    <property type="entry name" value="GATASE"/>
</dbReference>
<dbReference type="SUPFAM" id="SSF52402">
    <property type="entry name" value="Adenine nucleotide alpha hydrolases-like"/>
    <property type="match status" value="1"/>
</dbReference>
<dbReference type="SUPFAM" id="SSF52317">
    <property type="entry name" value="Class I glutamine amidotransferase-like"/>
    <property type="match status" value="1"/>
</dbReference>
<dbReference type="SUPFAM" id="SSF54810">
    <property type="entry name" value="GMP synthetase C-terminal dimerisation domain"/>
    <property type="match status" value="1"/>
</dbReference>
<dbReference type="PROSITE" id="PS51273">
    <property type="entry name" value="GATASE_TYPE_1"/>
    <property type="match status" value="1"/>
</dbReference>
<dbReference type="PROSITE" id="PS51553">
    <property type="entry name" value="GMPS_ATP_PPASE"/>
    <property type="match status" value="1"/>
</dbReference>
<evidence type="ECO:0000255" key="1">
    <source>
        <dbReference type="HAMAP-Rule" id="MF_00344"/>
    </source>
</evidence>
<name>GUAA_BRUC2</name>